<organism>
    <name type="scientific">Pyricularia oryzae (strain 70-15 / ATCC MYA-4617 / FGSC 8958)</name>
    <name type="common">Rice blast fungus</name>
    <name type="synonym">Magnaporthe oryzae</name>
    <dbReference type="NCBI Taxonomy" id="242507"/>
    <lineage>
        <taxon>Eukaryota</taxon>
        <taxon>Fungi</taxon>
        <taxon>Dikarya</taxon>
        <taxon>Ascomycota</taxon>
        <taxon>Pezizomycotina</taxon>
        <taxon>Sordariomycetes</taxon>
        <taxon>Sordariomycetidae</taxon>
        <taxon>Magnaporthales</taxon>
        <taxon>Pyriculariaceae</taxon>
        <taxon>Pyricularia</taxon>
    </lineage>
</organism>
<comment type="function">
    <text evidence="2 6">Phospholipid scramblase involved in autophagy and cytoplasm to vacuole transport (Cvt) vesicle formation. Cycles between the preautophagosomal structure/phagophore assembly site (PAS) and the cytoplasmic vesicle pool and supplies membrane for the growing autophagosome. Lipid scramblase activity plays a key role in preautophagosomal structure/phagophore assembly by distributing the phospholipids that arrive through ATG2 from the cytoplasmic to the luminal leaflet of the bilayer, thereby driving autophagosomal membrane expansion. Required for mitophagy. Also involved in endoplasmic reticulum-specific autophagic process and is essential for the survival of cells subjected to severe ER stress (By similarity). Different machineries are required for anterograde trafficking to the PAS during either the Cvt pathway or bulk autophagy and for retrograde trafficking (PubMed:30776962). Plays a role in appressorium formation and pathogenicity (PubMed:30776962).</text>
</comment>
<comment type="catalytic activity">
    <reaction evidence="2">
        <text>a 1,2-diacyl-sn-glycero-3-phosphocholine(in) = a 1,2-diacyl-sn-glycero-3-phosphocholine(out)</text>
        <dbReference type="Rhea" id="RHEA:38571"/>
        <dbReference type="ChEBI" id="CHEBI:57643"/>
    </reaction>
</comment>
<comment type="catalytic activity">
    <reaction evidence="2">
        <text>a 1,2-diacyl-sn-glycero-3-phospho-L-serine(in) = a 1,2-diacyl-sn-glycero-3-phospho-L-serine(out)</text>
        <dbReference type="Rhea" id="RHEA:38663"/>
        <dbReference type="ChEBI" id="CHEBI:57262"/>
    </reaction>
</comment>
<comment type="catalytic activity">
    <reaction evidence="2">
        <text>a 1,2-diacyl-sn-glycero-3-phosphoethanolamine(in) = a 1,2-diacyl-sn-glycero-3-phosphoethanolamine(out)</text>
        <dbReference type="Rhea" id="RHEA:38895"/>
        <dbReference type="ChEBI" id="CHEBI:64612"/>
    </reaction>
</comment>
<comment type="catalytic activity">
    <reaction evidence="2">
        <text>a 1,2-diacyl-sn-glycero-3-phospho-(1D-myo-inositol-3-phosphate)(in) = a 1,2-diacyl-sn-glycero-3-phospho-(1D-myo-inositol-3-phosphate)(out)</text>
        <dbReference type="Rhea" id="RHEA:67920"/>
        <dbReference type="ChEBI" id="CHEBI:58088"/>
    </reaction>
</comment>
<comment type="subunit">
    <text evidence="1 6">Homotrimer; forms a homotrimer with a central pore that forms a path between the two membrane leaflets (By similarity). Interacts with HAT1 (PubMed:30776962).</text>
</comment>
<comment type="subcellular location">
    <subcellularLocation>
        <location evidence="5 6">Preautophagosomal structure membrane</location>
        <topology evidence="7">Multi-pass membrane protein</topology>
    </subcellularLocation>
    <subcellularLocation>
        <location evidence="5">Cytoplasmic vesicle membrane</location>
        <topology evidence="7">Multi-pass membrane protein</topology>
    </subcellularLocation>
    <subcellularLocation>
        <location evidence="5">Vacuole membrane</location>
        <topology evidence="7">Multi-pass membrane protein</topology>
    </subcellularLocation>
    <subcellularLocation>
        <location evidence="2">Golgi apparatus membrane</location>
        <topology evidence="2">Multi-pass membrane protein</topology>
    </subcellularLocation>
    <subcellularLocation>
        <location evidence="2">Endoplasmic reticulum membrane</location>
        <topology evidence="2">Multi-pass membrane protein</topology>
    </subcellularLocation>
    <text evidence="5">Concurrent with the cytoplasmic punctation, localizes on the central vacuole of the submerged hyphae from the conidia cultured in rich media. ATG1, ATG2 and ATG18, but not ATG13, are required for ATG9-cycling through the multiple localization sites.</text>
</comment>
<comment type="domain">
    <text evidence="1">Forms a homotrimer with a solvated central pore, which is connected laterally to the cytosol through the cavity within each protomer. Acts as a lipid scramblase that uses its central pore to function: the central pore opens laterally to accommodate lipid headgroups, thereby enabling lipid flipping and redistribution of lipids added to the outer leaflet of ATG9-containing vesicles, thereby enabling growth into autophagosomes.</text>
</comment>
<comment type="PTM">
    <text evidence="6">Acetylated by HAT1 at Lys-621, which increases the ability to bind vesicles during nutrient starvation induction.</text>
</comment>
<comment type="PTM">
    <text evidence="2">Phosphorylated by ATG1. ATG1 phosphorylation is required for preautophagosome elongation.</text>
</comment>
<comment type="similarity">
    <text evidence="8">Belongs to the ATG9 family.</text>
</comment>
<reference key="1">
    <citation type="journal article" date="2005" name="Nature">
        <title>The genome sequence of the rice blast fungus Magnaporthe grisea.</title>
        <authorList>
            <person name="Dean R.A."/>
            <person name="Talbot N.J."/>
            <person name="Ebbole D.J."/>
            <person name="Farman M.L."/>
            <person name="Mitchell T.K."/>
            <person name="Orbach M.J."/>
            <person name="Thon M.R."/>
            <person name="Kulkarni R."/>
            <person name="Xu J.-R."/>
            <person name="Pan H."/>
            <person name="Read N.D."/>
            <person name="Lee Y.-H."/>
            <person name="Carbone I."/>
            <person name="Brown D."/>
            <person name="Oh Y.Y."/>
            <person name="Donofrio N."/>
            <person name="Jeong J.S."/>
            <person name="Soanes D.M."/>
            <person name="Djonovic S."/>
            <person name="Kolomiets E."/>
            <person name="Rehmeyer C."/>
            <person name="Li W."/>
            <person name="Harding M."/>
            <person name="Kim S."/>
            <person name="Lebrun M.-H."/>
            <person name="Bohnert H."/>
            <person name="Coughlan S."/>
            <person name="Butler J."/>
            <person name="Calvo S.E."/>
            <person name="Ma L.-J."/>
            <person name="Nicol R."/>
            <person name="Purcell S."/>
            <person name="Nusbaum C."/>
            <person name="Galagan J.E."/>
            <person name="Birren B.W."/>
        </authorList>
    </citation>
    <scope>NUCLEOTIDE SEQUENCE [LARGE SCALE GENOMIC DNA]</scope>
    <source>
        <strain>70-15 / ATCC MYA-4617 / FGSC 8958</strain>
    </source>
</reference>
<reference key="2">
    <citation type="journal article" date="2009" name="Autophagy">
        <title>MgAtg9 trafficking in Magnaporthe oryzae.</title>
        <authorList>
            <person name="Dong B."/>
            <person name="Liu X.H."/>
            <person name="Lu J.P."/>
            <person name="Zhang F.S."/>
            <person name="Gao H.M."/>
            <person name="Wang H.K."/>
            <person name="Lin F.C."/>
        </authorList>
    </citation>
    <scope>SUBCELLULAR LOCATION</scope>
    <scope>TRAFFICKING</scope>
</reference>
<reference key="3">
    <citation type="journal article" date="2019" name="Autophagy">
        <title>Histone acetyltransferase MoHat1 acetylates autophagy-related proteins MoAtg3 and MoAtg9 to orchestrate functional appressorium formation and pathogenicity in Magnaporthe oryzae.</title>
        <authorList>
            <person name="Yin Z."/>
            <person name="Chen C."/>
            <person name="Yang J."/>
            <person name="Feng W."/>
            <person name="Liu X."/>
            <person name="Zuo R."/>
            <person name="Wang J."/>
            <person name="Yang L."/>
            <person name="Zhong K."/>
            <person name="Gao C."/>
            <person name="Zhang H."/>
            <person name="Zheng X."/>
            <person name="Wang P."/>
            <person name="Zhang Z."/>
        </authorList>
    </citation>
    <scope>FUNCTION</scope>
    <scope>INTERACTION WITH HAT1</scope>
    <scope>SUBCELLULAR LOCATION</scope>
    <scope>ACETYLATION AT LYS-621</scope>
    <scope>MUTAGENESIS OF LYS-621</scope>
</reference>
<name>ATG9_PYRO7</name>
<proteinExistence type="evidence at protein level"/>
<gene>
    <name evidence="7" type="primary">ATG9</name>
    <name type="ORF">MGG_09559</name>
</gene>
<evidence type="ECO:0000250" key="1">
    <source>
        <dbReference type="UniProtKB" id="O74312"/>
    </source>
</evidence>
<evidence type="ECO:0000250" key="2">
    <source>
        <dbReference type="UniProtKB" id="Q12142"/>
    </source>
</evidence>
<evidence type="ECO:0000255" key="3"/>
<evidence type="ECO:0000256" key="4">
    <source>
        <dbReference type="SAM" id="MobiDB-lite"/>
    </source>
</evidence>
<evidence type="ECO:0000269" key="5">
    <source>
    </source>
</evidence>
<evidence type="ECO:0000269" key="6">
    <source>
    </source>
</evidence>
<evidence type="ECO:0000303" key="7">
    <source>
    </source>
</evidence>
<evidence type="ECO:0000305" key="8"/>
<accession>Q51WZ9</accession>
<accession>A4QUK6</accession>
<accession>G4N1A4</accession>
<dbReference type="EMBL" id="CM001233">
    <property type="protein sequence ID" value="EHA52375.1"/>
    <property type="molecule type" value="Genomic_DNA"/>
</dbReference>
<dbReference type="RefSeq" id="XP_003712182.1">
    <property type="nucleotide sequence ID" value="XM_003712134.1"/>
</dbReference>
<dbReference type="SMR" id="Q51WZ9"/>
<dbReference type="STRING" id="242507.Q51WZ9"/>
<dbReference type="GlyCosmos" id="Q51WZ9">
    <property type="glycosylation" value="1 site, No reported glycans"/>
</dbReference>
<dbReference type="iPTMnet" id="Q51WZ9"/>
<dbReference type="EnsemblFungi" id="MGG_09559T0">
    <property type="protein sequence ID" value="MGG_09559T0"/>
    <property type="gene ID" value="MGG_09559"/>
</dbReference>
<dbReference type="GeneID" id="2680457"/>
<dbReference type="KEGG" id="mgr:MGG_09559"/>
<dbReference type="VEuPathDB" id="FungiDB:MGG_09559"/>
<dbReference type="eggNOG" id="KOG2173">
    <property type="taxonomic scope" value="Eukaryota"/>
</dbReference>
<dbReference type="HOGENOM" id="CLU_006200_1_1_1"/>
<dbReference type="InParanoid" id="Q51WZ9"/>
<dbReference type="OMA" id="MMHYFFR"/>
<dbReference type="OrthoDB" id="2020634at2759"/>
<dbReference type="PHI-base" id="PHI:11531"/>
<dbReference type="PHI-base" id="PHI:2066"/>
<dbReference type="PHI-base" id="PHI:2077"/>
<dbReference type="PHI-base" id="PHI:8264"/>
<dbReference type="Proteomes" id="UP000009058">
    <property type="component" value="Chromosome 3"/>
</dbReference>
<dbReference type="GO" id="GO:0005776">
    <property type="term" value="C:autophagosome"/>
    <property type="evidence" value="ECO:0007669"/>
    <property type="project" value="TreeGrafter"/>
</dbReference>
<dbReference type="GO" id="GO:0030659">
    <property type="term" value="C:cytoplasmic vesicle membrane"/>
    <property type="evidence" value="ECO:0007669"/>
    <property type="project" value="UniProtKB-SubCell"/>
</dbReference>
<dbReference type="GO" id="GO:0005789">
    <property type="term" value="C:endoplasmic reticulum membrane"/>
    <property type="evidence" value="ECO:0007669"/>
    <property type="project" value="UniProtKB-SubCell"/>
</dbReference>
<dbReference type="GO" id="GO:0000139">
    <property type="term" value="C:Golgi membrane"/>
    <property type="evidence" value="ECO:0007669"/>
    <property type="project" value="UniProtKB-SubCell"/>
</dbReference>
<dbReference type="GO" id="GO:0034045">
    <property type="term" value="C:phagophore assembly site membrane"/>
    <property type="evidence" value="ECO:0007669"/>
    <property type="project" value="UniProtKB-SubCell"/>
</dbReference>
<dbReference type="GO" id="GO:0005774">
    <property type="term" value="C:vacuolar membrane"/>
    <property type="evidence" value="ECO:0007669"/>
    <property type="project" value="UniProtKB-SubCell"/>
</dbReference>
<dbReference type="GO" id="GO:0000422">
    <property type="term" value="P:autophagy of mitochondrion"/>
    <property type="evidence" value="ECO:0007669"/>
    <property type="project" value="TreeGrafter"/>
</dbReference>
<dbReference type="GO" id="GO:0006869">
    <property type="term" value="P:lipid transport"/>
    <property type="evidence" value="ECO:0007669"/>
    <property type="project" value="UniProtKB-KW"/>
</dbReference>
<dbReference type="GO" id="GO:0034727">
    <property type="term" value="P:piecemeal microautophagy of the nucleus"/>
    <property type="evidence" value="ECO:0007669"/>
    <property type="project" value="TreeGrafter"/>
</dbReference>
<dbReference type="GO" id="GO:0034497">
    <property type="term" value="P:protein localization to phagophore assembly site"/>
    <property type="evidence" value="ECO:0007669"/>
    <property type="project" value="TreeGrafter"/>
</dbReference>
<dbReference type="GO" id="GO:0061709">
    <property type="term" value="P:reticulophagy"/>
    <property type="evidence" value="ECO:0007669"/>
    <property type="project" value="TreeGrafter"/>
</dbReference>
<dbReference type="InterPro" id="IPR007241">
    <property type="entry name" value="Autophagy-rel_prot_9"/>
</dbReference>
<dbReference type="PANTHER" id="PTHR13038">
    <property type="entry name" value="APG9 AUTOPHAGY 9"/>
    <property type="match status" value="1"/>
</dbReference>
<dbReference type="PANTHER" id="PTHR13038:SF10">
    <property type="entry name" value="AUTOPHAGY-RELATED PROTEIN 9"/>
    <property type="match status" value="1"/>
</dbReference>
<dbReference type="Pfam" id="PF04109">
    <property type="entry name" value="ATG9"/>
    <property type="match status" value="1"/>
</dbReference>
<protein>
    <recommendedName>
        <fullName evidence="7">Autophagy-related protein 9</fullName>
    </recommendedName>
</protein>
<feature type="chain" id="PRO_0000119833" description="Autophagy-related protein 9">
    <location>
        <begin position="1"/>
        <end position="917"/>
    </location>
</feature>
<feature type="topological domain" description="Cytoplasmic" evidence="8">
    <location>
        <begin position="1"/>
        <end position="226"/>
    </location>
</feature>
<feature type="transmembrane region" description="Helical" evidence="3">
    <location>
        <begin position="227"/>
        <end position="247"/>
    </location>
</feature>
<feature type="topological domain" description="Lumenal" evidence="8">
    <location>
        <begin position="248"/>
        <end position="275"/>
    </location>
</feature>
<feature type="transmembrane region" description="Helical" evidence="3">
    <location>
        <begin position="276"/>
        <end position="296"/>
    </location>
</feature>
<feature type="topological domain" description="Cytoplasmic" evidence="8">
    <location>
        <begin position="297"/>
        <end position="442"/>
    </location>
</feature>
<feature type="intramembrane region" evidence="1">
    <location>
        <begin position="443"/>
        <end position="463"/>
    </location>
</feature>
<feature type="topological domain" description="Cytoplasmic" evidence="8">
    <location>
        <begin position="464"/>
        <end position="539"/>
    </location>
</feature>
<feature type="transmembrane region" description="Helical" evidence="3">
    <location>
        <begin position="540"/>
        <end position="560"/>
    </location>
</feature>
<feature type="topological domain" description="Lumenal" evidence="8">
    <location>
        <begin position="561"/>
        <end position="564"/>
    </location>
</feature>
<feature type="transmembrane region" description="Helical" evidence="3">
    <location>
        <begin position="565"/>
        <end position="585"/>
    </location>
</feature>
<feature type="topological domain" description="Cytoplasmic" evidence="8">
    <location>
        <begin position="586"/>
        <end position="633"/>
    </location>
</feature>
<feature type="intramembrane region" evidence="1">
    <location>
        <begin position="634"/>
        <end position="654"/>
    </location>
</feature>
<feature type="topological domain" description="Cytoplasmic" evidence="8">
    <location>
        <begin position="655"/>
        <end position="917"/>
    </location>
</feature>
<feature type="region of interest" description="Disordered" evidence="4">
    <location>
        <begin position="16"/>
        <end position="37"/>
    </location>
</feature>
<feature type="region of interest" description="Disordered" evidence="4">
    <location>
        <begin position="119"/>
        <end position="177"/>
    </location>
</feature>
<feature type="region of interest" description="Disordered" evidence="4">
    <location>
        <begin position="854"/>
        <end position="895"/>
    </location>
</feature>
<feature type="compositionally biased region" description="Polar residues" evidence="4">
    <location>
        <begin position="875"/>
        <end position="895"/>
    </location>
</feature>
<feature type="modified residue" description="N6-acetyllysine" evidence="6">
    <location>
        <position position="621"/>
    </location>
</feature>
<feature type="glycosylation site" description="N-linked (GlcNAc...) asparagine" evidence="3">
    <location>
        <position position="269"/>
    </location>
</feature>
<feature type="mutagenesis site" description="Disturbs the acetylation levels of ATG9 and impairs the binding ability to vesicles during nutrient starvation induction." evidence="6">
    <original>K</original>
    <variation>R</variation>
    <location>
        <position position="621"/>
    </location>
</feature>
<keyword id="KW-0007">Acetylation</keyword>
<keyword id="KW-0072">Autophagy</keyword>
<keyword id="KW-0968">Cytoplasmic vesicle</keyword>
<keyword id="KW-0256">Endoplasmic reticulum</keyword>
<keyword id="KW-0309">Germination</keyword>
<keyword id="KW-0325">Glycoprotein</keyword>
<keyword id="KW-0333">Golgi apparatus</keyword>
<keyword id="KW-0445">Lipid transport</keyword>
<keyword id="KW-0472">Membrane</keyword>
<keyword id="KW-0597">Phosphoprotein</keyword>
<keyword id="KW-1185">Reference proteome</keyword>
<keyword id="KW-0346">Stress response</keyword>
<keyword id="KW-0812">Transmembrane</keyword>
<keyword id="KW-1133">Transmembrane helix</keyword>
<keyword id="KW-0813">Transport</keyword>
<keyword id="KW-0926">Vacuole</keyword>
<keyword id="KW-0843">Virulence</keyword>
<sequence>MASNIFSRLVPQDRGRSFYEDLRQTDPDADLESRAGIDIDEENLNRSYHDYDLDEAERLAGDESHISHSRGDVAGANTVHRRGQKANTARWLGAGVEDDVDNDVPESLLVETPRAPQHLLLSPSRAGPSHPRPTAVPGPSTRQNQAQWEATRHQQRLHNDDTMPHGPFSGRAGQGRPEPPPVGLMAGDPYEQAMWRWVNVSNLDNFIKDVYAYYRAAGFWCIIVQRILELVNAAFVAVFLTFLSQCVDYHKLPHSKKMEDIIIPKCTQNMSLVWNVGLWLFAIYFICRCFGLIIQLRQLKHLRDFYTHLLKIPEADMQSVSWQDVVGRIMALRDSHPRTAGNLTRVQRAWIGSQSKERLDAHDIANRIMRRENFMIAMLNKDVLDLTIPLPFFRNKQHMSECVVLAISFSILDFVFDNQGQVNPEFLKASRRRQLSQKLKSRFFFAGLMIFVMSPFIALYLILVYFLTYFHEFRNDPGALGARTYNSLAKWKFREFNELDHLFNDRMNMSHPFAKRYIDMFPKRKTEQVARTVSFITGSIVAVLGLATIFDSEAFLTFEITPDRSVLFYVSILATLWAVARGNISDDNEVYDPEFAMKSIIEFTHYEPDHWRGRLHSTEVKNEFSELYKPRPQIFLEEILSILLTPLVLLVSLPNSTDQIVDFFREFTIHVDGLGYVCLFSVFNFQQGHANQKQAAAADAPDNREEYYSTKHGKMAASFYGFLDHYVINPKTGLPGNQLPGSRQQFQHPPSFPGLQSPTLAADMRHSRMMRERGRSSGVQIQGSQGRTPQFRTPMPQPSPMASILLDPHHQPAPGAFGSRSMHRSRQMAVPHRGGYMSDRDIIEEAVTEDGQDDARFGKLGDEDIDESGGALDESTWQTSPTKTLSRENSGANPQETEVGVLGLIHQFQQAHMHLRR</sequence>